<comment type="catalytic activity">
    <reaction>
        <text>orotidine 5'-phosphate + diphosphate = orotate + 5-phospho-alpha-D-ribose 1-diphosphate</text>
        <dbReference type="Rhea" id="RHEA:10380"/>
        <dbReference type="ChEBI" id="CHEBI:30839"/>
        <dbReference type="ChEBI" id="CHEBI:33019"/>
        <dbReference type="ChEBI" id="CHEBI:57538"/>
        <dbReference type="ChEBI" id="CHEBI:58017"/>
        <dbReference type="EC" id="2.4.2.10"/>
    </reaction>
</comment>
<comment type="catalytic activity">
    <reaction>
        <text>orotidine 5'-phosphate + H(+) = UMP + CO2</text>
        <dbReference type="Rhea" id="RHEA:11596"/>
        <dbReference type="ChEBI" id="CHEBI:15378"/>
        <dbReference type="ChEBI" id="CHEBI:16526"/>
        <dbReference type="ChEBI" id="CHEBI:57538"/>
        <dbReference type="ChEBI" id="CHEBI:57865"/>
        <dbReference type="EC" id="4.1.1.23"/>
    </reaction>
</comment>
<comment type="pathway">
    <text>Pyrimidine metabolism; UMP biosynthesis via de novo pathway; UMP from orotate: step 1/2.</text>
</comment>
<comment type="pathway">
    <text>Pyrimidine metabolism; UMP biosynthesis via de novo pathway; UMP from orotate: step 2/2.</text>
</comment>
<comment type="similarity">
    <text evidence="2">In the N-terminal section; belongs to the purine/pyrimidine phosphoribosyltransferase family.</text>
</comment>
<comment type="similarity">
    <text evidence="2">In the C-terminal section; belongs to the OMP decarboxylase family.</text>
</comment>
<comment type="sequence caution" evidence="2">
    <conflict type="erroneous gene model prediction">
        <sequence resource="EMBL-CDS" id="BAF07327"/>
    </conflict>
</comment>
<protein>
    <recommendedName>
        <fullName>Uridine 5'-monophosphate synthase</fullName>
        <shortName>UMP synthase</shortName>
    </recommendedName>
    <domain>
        <recommendedName>
            <fullName>Orotate phosphoribosyltransferase</fullName>
            <shortName>OPRTase</shortName>
            <ecNumber>2.4.2.10</ecNumber>
        </recommendedName>
    </domain>
    <domain>
        <recommendedName>
            <fullName>Orotidine 5'-phosphate decarboxylase</fullName>
            <ecNumber>4.1.1.23</ecNumber>
        </recommendedName>
        <alternativeName>
            <fullName>OMPdecase</fullName>
        </alternativeName>
    </domain>
</protein>
<sequence length="475" mass="50807">MDAAAMESLILELHAIEAVKFGAFVLKSGITSPIYLDLRMLVAHPRLLSTVASLLGSLPATRPYDLLCGVPYTALPIASVLSAAASVPMLLRRYHVTPHAAAECLDGSFRAGDAVLIVEDLVTTGSSVLETVAPLREVGLVVADAVVVIDREQGGRENLAANGVALHSLMTLTEVLAVLVKRGKLGEEKAQEVKRFLDANRKMAVPGLPVKPKVVRKAFSERAGLATNPMGRKLFELMEAKQSNLCVAADVGTATELLDLADKIGPEICMLKTHVDILSDFTPDFGHKLRSIAERHSFLIFEDRKFADIGNTVTMQYEGGIFRILDWADIVNAHIVSGPGIVEGLKLKGLPKGRGLLLLSEMSSAGNLAHGDYTAAAVKIAEQHSDIVIGFISVNPASWSVTPSSPAFIHATPGVQLVAGGDSLGQQYNTPYSVINDRGSDIIIVGRGIIRANNPAETAREYRIQGWHAYQSSLS</sequence>
<name>UMPS2_ORYSJ</name>
<feature type="chain" id="PRO_0000423082" description="Uridine 5'-monophosphate synthase">
    <location>
        <begin position="1"/>
        <end position="475"/>
    </location>
</feature>
<feature type="active site" evidence="1">
    <location>
        <position position="305"/>
    </location>
</feature>
<reference key="1">
    <citation type="journal article" date="2002" name="Nature">
        <title>The genome sequence and structure of rice chromosome 1.</title>
        <authorList>
            <person name="Sasaki T."/>
            <person name="Matsumoto T."/>
            <person name="Yamamoto K."/>
            <person name="Sakata K."/>
            <person name="Baba T."/>
            <person name="Katayose Y."/>
            <person name="Wu J."/>
            <person name="Niimura Y."/>
            <person name="Cheng Z."/>
            <person name="Nagamura Y."/>
            <person name="Antonio B.A."/>
            <person name="Kanamori H."/>
            <person name="Hosokawa S."/>
            <person name="Masukawa M."/>
            <person name="Arikawa K."/>
            <person name="Chiden Y."/>
            <person name="Hayashi M."/>
            <person name="Okamoto M."/>
            <person name="Ando T."/>
            <person name="Aoki H."/>
            <person name="Arita K."/>
            <person name="Hamada M."/>
            <person name="Harada C."/>
            <person name="Hijishita S."/>
            <person name="Honda M."/>
            <person name="Ichikawa Y."/>
            <person name="Idonuma A."/>
            <person name="Iijima M."/>
            <person name="Ikeda M."/>
            <person name="Ikeno M."/>
            <person name="Ito S."/>
            <person name="Ito T."/>
            <person name="Ito Y."/>
            <person name="Ito Y."/>
            <person name="Iwabuchi A."/>
            <person name="Kamiya K."/>
            <person name="Karasawa W."/>
            <person name="Katagiri S."/>
            <person name="Kikuta A."/>
            <person name="Kobayashi N."/>
            <person name="Kono I."/>
            <person name="Machita K."/>
            <person name="Maehara T."/>
            <person name="Mizuno H."/>
            <person name="Mizubayashi T."/>
            <person name="Mukai Y."/>
            <person name="Nagasaki H."/>
            <person name="Nakashima M."/>
            <person name="Nakama Y."/>
            <person name="Nakamichi Y."/>
            <person name="Nakamura M."/>
            <person name="Namiki N."/>
            <person name="Negishi M."/>
            <person name="Ohta I."/>
            <person name="Ono N."/>
            <person name="Saji S."/>
            <person name="Sakai K."/>
            <person name="Shibata M."/>
            <person name="Shimokawa T."/>
            <person name="Shomura A."/>
            <person name="Song J."/>
            <person name="Takazaki Y."/>
            <person name="Terasawa K."/>
            <person name="Tsuji K."/>
            <person name="Waki K."/>
            <person name="Yamagata H."/>
            <person name="Yamane H."/>
            <person name="Yoshiki S."/>
            <person name="Yoshihara R."/>
            <person name="Yukawa K."/>
            <person name="Zhong H."/>
            <person name="Iwama H."/>
            <person name="Endo T."/>
            <person name="Ito H."/>
            <person name="Hahn J.H."/>
            <person name="Kim H.-I."/>
            <person name="Eun M.-Y."/>
            <person name="Yano M."/>
            <person name="Jiang J."/>
            <person name="Gojobori T."/>
        </authorList>
    </citation>
    <scope>NUCLEOTIDE SEQUENCE [LARGE SCALE GENOMIC DNA]</scope>
    <source>
        <strain>cv. Nipponbare</strain>
    </source>
</reference>
<reference key="2">
    <citation type="journal article" date="2005" name="Nature">
        <title>The map-based sequence of the rice genome.</title>
        <authorList>
            <consortium name="International rice genome sequencing project (IRGSP)"/>
        </authorList>
    </citation>
    <scope>NUCLEOTIDE SEQUENCE [LARGE SCALE GENOMIC DNA]</scope>
    <source>
        <strain>cv. Nipponbare</strain>
    </source>
</reference>
<reference key="3">
    <citation type="journal article" date="2008" name="Nucleic Acids Res.">
        <title>The rice annotation project database (RAP-DB): 2008 update.</title>
        <authorList>
            <consortium name="The rice annotation project (RAP)"/>
        </authorList>
    </citation>
    <scope>GENOME REANNOTATION</scope>
    <source>
        <strain>cv. Nipponbare</strain>
    </source>
</reference>
<reference key="4">
    <citation type="journal article" date="2013" name="Rice">
        <title>Improvement of the Oryza sativa Nipponbare reference genome using next generation sequence and optical map data.</title>
        <authorList>
            <person name="Kawahara Y."/>
            <person name="de la Bastide M."/>
            <person name="Hamilton J.P."/>
            <person name="Kanamori H."/>
            <person name="McCombie W.R."/>
            <person name="Ouyang S."/>
            <person name="Schwartz D.C."/>
            <person name="Tanaka T."/>
            <person name="Wu J."/>
            <person name="Zhou S."/>
            <person name="Childs K.L."/>
            <person name="Davidson R.M."/>
            <person name="Lin H."/>
            <person name="Quesada-Ocampo L."/>
            <person name="Vaillancourt B."/>
            <person name="Sakai H."/>
            <person name="Lee S.S."/>
            <person name="Kim J."/>
            <person name="Numa H."/>
            <person name="Itoh T."/>
            <person name="Buell C.R."/>
            <person name="Matsumoto T."/>
        </authorList>
    </citation>
    <scope>GENOME REANNOTATION</scope>
    <source>
        <strain>cv. Nipponbare</strain>
    </source>
</reference>
<reference key="5">
    <citation type="journal article" date="2003" name="Science">
        <title>Collection, mapping, and annotation of over 28,000 cDNA clones from japonica rice.</title>
        <authorList>
            <consortium name="The rice full-length cDNA consortium"/>
        </authorList>
    </citation>
    <scope>NUCLEOTIDE SEQUENCE [LARGE SCALE MRNA]</scope>
    <source>
        <strain>cv. Nipponbare</strain>
    </source>
</reference>
<organism>
    <name type="scientific">Oryza sativa subsp. japonica</name>
    <name type="common">Rice</name>
    <dbReference type="NCBI Taxonomy" id="39947"/>
    <lineage>
        <taxon>Eukaryota</taxon>
        <taxon>Viridiplantae</taxon>
        <taxon>Streptophyta</taxon>
        <taxon>Embryophyta</taxon>
        <taxon>Tracheophyta</taxon>
        <taxon>Spermatophyta</taxon>
        <taxon>Magnoliopsida</taxon>
        <taxon>Liliopsida</taxon>
        <taxon>Poales</taxon>
        <taxon>Poaceae</taxon>
        <taxon>BOP clade</taxon>
        <taxon>Oryzoideae</taxon>
        <taxon>Oryzeae</taxon>
        <taxon>Oryzinae</taxon>
        <taxon>Oryza</taxon>
        <taxon>Oryza sativa</taxon>
    </lineage>
</organism>
<dbReference type="EC" id="2.4.2.10"/>
<dbReference type="EC" id="4.1.1.23"/>
<dbReference type="EMBL" id="AP003735">
    <property type="protein sequence ID" value="BAB86208.1"/>
    <property type="molecule type" value="Genomic_DNA"/>
</dbReference>
<dbReference type="EMBL" id="AP008207">
    <property type="protein sequence ID" value="BAF07327.2"/>
    <property type="status" value="ALT_SEQ"/>
    <property type="molecule type" value="Genomic_DNA"/>
</dbReference>
<dbReference type="EMBL" id="AP014957">
    <property type="protein sequence ID" value="BAS76245.1"/>
    <property type="molecule type" value="Genomic_DNA"/>
</dbReference>
<dbReference type="EMBL" id="AK102468">
    <property type="protein sequence ID" value="BAG95570.1"/>
    <property type="molecule type" value="mRNA"/>
</dbReference>
<dbReference type="RefSeq" id="XP_015621270.1">
    <property type="nucleotide sequence ID" value="XM_015765784.1"/>
</dbReference>
<dbReference type="SMR" id="Q8RZA1"/>
<dbReference type="FunCoup" id="Q8RZA1">
    <property type="interactions" value="3239"/>
</dbReference>
<dbReference type="STRING" id="39947.Q8RZA1"/>
<dbReference type="PaxDb" id="39947-Q8RZA1"/>
<dbReference type="EnsemblPlants" id="Os01t0951400-01">
    <property type="protein sequence ID" value="Os01t0951400-01"/>
    <property type="gene ID" value="Os01g0951400"/>
</dbReference>
<dbReference type="Gramene" id="Os01t0951400-01">
    <property type="protein sequence ID" value="Os01t0951400-01"/>
    <property type="gene ID" value="Os01g0951400"/>
</dbReference>
<dbReference type="KEGG" id="dosa:Os01g0951400"/>
<dbReference type="eggNOG" id="KOG1377">
    <property type="taxonomic scope" value="Eukaryota"/>
</dbReference>
<dbReference type="HOGENOM" id="CLU_049275_1_0_1"/>
<dbReference type="InParanoid" id="Q8RZA1"/>
<dbReference type="OMA" id="IEGDFKH"/>
<dbReference type="OrthoDB" id="10263753at2759"/>
<dbReference type="UniPathway" id="UPA00070">
    <property type="reaction ID" value="UER00119"/>
</dbReference>
<dbReference type="UniPathway" id="UPA00070">
    <property type="reaction ID" value="UER00120"/>
</dbReference>
<dbReference type="Proteomes" id="UP000000763">
    <property type="component" value="Chromosome 1"/>
</dbReference>
<dbReference type="Proteomes" id="UP000059680">
    <property type="component" value="Chromosome 1"/>
</dbReference>
<dbReference type="ExpressionAtlas" id="Q8RZA1">
    <property type="expression patterns" value="baseline and differential"/>
</dbReference>
<dbReference type="GO" id="GO:0004588">
    <property type="term" value="F:orotate phosphoribosyltransferase activity"/>
    <property type="evidence" value="ECO:0000318"/>
    <property type="project" value="GO_Central"/>
</dbReference>
<dbReference type="GO" id="GO:0004590">
    <property type="term" value="F:orotidine-5'-phosphate decarboxylase activity"/>
    <property type="evidence" value="ECO:0000318"/>
    <property type="project" value="GO_Central"/>
</dbReference>
<dbReference type="GO" id="GO:0006207">
    <property type="term" value="P:'de novo' pyrimidine nucleobase biosynthetic process"/>
    <property type="evidence" value="ECO:0007669"/>
    <property type="project" value="InterPro"/>
</dbReference>
<dbReference type="GO" id="GO:0044205">
    <property type="term" value="P:'de novo' UMP biosynthetic process"/>
    <property type="evidence" value="ECO:0007669"/>
    <property type="project" value="UniProtKB-UniPathway"/>
</dbReference>
<dbReference type="GO" id="GO:0019856">
    <property type="term" value="P:pyrimidine nucleobase biosynthetic process"/>
    <property type="evidence" value="ECO:0000318"/>
    <property type="project" value="GO_Central"/>
</dbReference>
<dbReference type="GO" id="GO:0006222">
    <property type="term" value="P:UMP biosynthetic process"/>
    <property type="evidence" value="ECO:0000318"/>
    <property type="project" value="GO_Central"/>
</dbReference>
<dbReference type="CDD" id="cd04725">
    <property type="entry name" value="OMP_decarboxylase_like"/>
    <property type="match status" value="1"/>
</dbReference>
<dbReference type="CDD" id="cd06223">
    <property type="entry name" value="PRTases_typeI"/>
    <property type="match status" value="1"/>
</dbReference>
<dbReference type="FunFam" id="3.20.20.70:FF:000092">
    <property type="entry name" value="Uridine monophosphate synthetase"/>
    <property type="match status" value="1"/>
</dbReference>
<dbReference type="FunFam" id="3.40.50.2020:FF:000025">
    <property type="entry name" value="Uridine monophosphate synthetase"/>
    <property type="match status" value="1"/>
</dbReference>
<dbReference type="Gene3D" id="3.40.50.2020">
    <property type="match status" value="1"/>
</dbReference>
<dbReference type="Gene3D" id="3.20.20.70">
    <property type="entry name" value="Aldolase class I"/>
    <property type="match status" value="1"/>
</dbReference>
<dbReference type="HAMAP" id="MF_01208">
    <property type="entry name" value="PyrE"/>
    <property type="match status" value="1"/>
</dbReference>
<dbReference type="InterPro" id="IPR013785">
    <property type="entry name" value="Aldolase_TIM"/>
</dbReference>
<dbReference type="InterPro" id="IPR014732">
    <property type="entry name" value="OMPdecase"/>
</dbReference>
<dbReference type="InterPro" id="IPR018089">
    <property type="entry name" value="OMPdecase_AS"/>
</dbReference>
<dbReference type="InterPro" id="IPR001754">
    <property type="entry name" value="OMPdeCOase_dom"/>
</dbReference>
<dbReference type="InterPro" id="IPR023031">
    <property type="entry name" value="OPRT"/>
</dbReference>
<dbReference type="InterPro" id="IPR000836">
    <property type="entry name" value="PRibTrfase_dom"/>
</dbReference>
<dbReference type="InterPro" id="IPR029057">
    <property type="entry name" value="PRTase-like"/>
</dbReference>
<dbReference type="InterPro" id="IPR011060">
    <property type="entry name" value="RibuloseP-bd_barrel"/>
</dbReference>
<dbReference type="NCBIfam" id="TIGR01740">
    <property type="entry name" value="pyrF"/>
    <property type="match status" value="1"/>
</dbReference>
<dbReference type="PANTHER" id="PTHR19278">
    <property type="entry name" value="OROTATE PHOSPHORIBOSYLTRANSFERASE"/>
    <property type="match status" value="1"/>
</dbReference>
<dbReference type="PANTHER" id="PTHR19278:SF40">
    <property type="entry name" value="URIDINE 5'-MONOPHOSPHATE SYNTHASE"/>
    <property type="match status" value="1"/>
</dbReference>
<dbReference type="Pfam" id="PF00215">
    <property type="entry name" value="OMPdecase"/>
    <property type="match status" value="1"/>
</dbReference>
<dbReference type="SMART" id="SM00934">
    <property type="entry name" value="OMPdecase"/>
    <property type="match status" value="1"/>
</dbReference>
<dbReference type="SUPFAM" id="SSF53271">
    <property type="entry name" value="PRTase-like"/>
    <property type="match status" value="1"/>
</dbReference>
<dbReference type="SUPFAM" id="SSF51366">
    <property type="entry name" value="Ribulose-phoshate binding barrel"/>
    <property type="match status" value="1"/>
</dbReference>
<dbReference type="PROSITE" id="PS00156">
    <property type="entry name" value="OMPDECASE"/>
    <property type="match status" value="1"/>
</dbReference>
<dbReference type="PROSITE" id="PS00103">
    <property type="entry name" value="PUR_PYR_PR_TRANSFER"/>
    <property type="match status" value="1"/>
</dbReference>
<proteinExistence type="evidence at transcript level"/>
<keyword id="KW-0210">Decarboxylase</keyword>
<keyword id="KW-0328">Glycosyltransferase</keyword>
<keyword id="KW-0456">Lyase</keyword>
<keyword id="KW-0511">Multifunctional enzyme</keyword>
<keyword id="KW-0665">Pyrimidine biosynthesis</keyword>
<keyword id="KW-1185">Reference proteome</keyword>
<keyword id="KW-0808">Transferase</keyword>
<gene>
    <name type="primary">UMPS2</name>
    <name type="ordered locus">Os01g0951400</name>
    <name type="ordered locus">LOC_Os01g72250</name>
    <name type="ORF">B1147A04.39</name>
</gene>
<accession>Q8RZA1</accession>
<accession>A0A0P0VCW6</accession>
<accession>Q0JG01</accession>
<evidence type="ECO:0000250" key="1"/>
<evidence type="ECO:0000305" key="2"/>